<name>RL23_ACET2</name>
<proteinExistence type="inferred from homology"/>
<sequence length="117" mass="13289">MRPAEDIIKRPYITEKSNAEIANGKYTFIVDAKATKTEIRQAVEKLFQVKVLKVNTVNYKGKRKRLGVHEGFRPDWKKAIVKIDTEPKPVTYLTEGGKTATTTKKYKTSIEEFGAAQ</sequence>
<reference key="1">
    <citation type="submission" date="2007-02" db="EMBL/GenBank/DDBJ databases">
        <title>Complete sequence of Clostridium thermocellum ATCC 27405.</title>
        <authorList>
            <consortium name="US DOE Joint Genome Institute"/>
            <person name="Copeland A."/>
            <person name="Lucas S."/>
            <person name="Lapidus A."/>
            <person name="Barry K."/>
            <person name="Detter J.C."/>
            <person name="Glavina del Rio T."/>
            <person name="Hammon N."/>
            <person name="Israni S."/>
            <person name="Dalin E."/>
            <person name="Tice H."/>
            <person name="Pitluck S."/>
            <person name="Chertkov O."/>
            <person name="Brettin T."/>
            <person name="Bruce D."/>
            <person name="Han C."/>
            <person name="Tapia R."/>
            <person name="Gilna P."/>
            <person name="Schmutz J."/>
            <person name="Larimer F."/>
            <person name="Land M."/>
            <person name="Hauser L."/>
            <person name="Kyrpides N."/>
            <person name="Mikhailova N."/>
            <person name="Wu J.H.D."/>
            <person name="Newcomb M."/>
            <person name="Richardson P."/>
        </authorList>
    </citation>
    <scope>NUCLEOTIDE SEQUENCE [LARGE SCALE GENOMIC DNA]</scope>
    <source>
        <strain>ATCC 27405 / DSM 1237 / JCM 9322 / NBRC 103400 / NCIMB 10682 / NRRL B-4536 / VPI 7372</strain>
    </source>
</reference>
<comment type="function">
    <text evidence="1">One of the early assembly proteins it binds 23S rRNA. One of the proteins that surrounds the polypeptide exit tunnel on the outside of the ribosome. Forms the main docking site for trigger factor binding to the ribosome.</text>
</comment>
<comment type="subunit">
    <text evidence="1">Part of the 50S ribosomal subunit. Contacts protein L29, and trigger factor when it is bound to the ribosome.</text>
</comment>
<comment type="similarity">
    <text evidence="1">Belongs to the universal ribosomal protein uL23 family.</text>
</comment>
<accession>A3DJH4</accession>
<dbReference type="EMBL" id="CP000568">
    <property type="protein sequence ID" value="ABN54103.1"/>
    <property type="molecule type" value="Genomic_DNA"/>
</dbReference>
<dbReference type="RefSeq" id="WP_003514625.1">
    <property type="nucleotide sequence ID" value="NC_009012.1"/>
</dbReference>
<dbReference type="SMR" id="A3DJH4"/>
<dbReference type="STRING" id="203119.Cthe_2905"/>
<dbReference type="GeneID" id="35805646"/>
<dbReference type="KEGG" id="cth:Cthe_2905"/>
<dbReference type="eggNOG" id="COG0089">
    <property type="taxonomic scope" value="Bacteria"/>
</dbReference>
<dbReference type="HOGENOM" id="CLU_037562_3_2_9"/>
<dbReference type="OrthoDB" id="9793353at2"/>
<dbReference type="Proteomes" id="UP000002145">
    <property type="component" value="Chromosome"/>
</dbReference>
<dbReference type="GO" id="GO:1990904">
    <property type="term" value="C:ribonucleoprotein complex"/>
    <property type="evidence" value="ECO:0007669"/>
    <property type="project" value="UniProtKB-KW"/>
</dbReference>
<dbReference type="GO" id="GO:0005840">
    <property type="term" value="C:ribosome"/>
    <property type="evidence" value="ECO:0007669"/>
    <property type="project" value="UniProtKB-KW"/>
</dbReference>
<dbReference type="GO" id="GO:0019843">
    <property type="term" value="F:rRNA binding"/>
    <property type="evidence" value="ECO:0007669"/>
    <property type="project" value="UniProtKB-UniRule"/>
</dbReference>
<dbReference type="GO" id="GO:0003735">
    <property type="term" value="F:structural constituent of ribosome"/>
    <property type="evidence" value="ECO:0007669"/>
    <property type="project" value="InterPro"/>
</dbReference>
<dbReference type="GO" id="GO:0006412">
    <property type="term" value="P:translation"/>
    <property type="evidence" value="ECO:0007669"/>
    <property type="project" value="UniProtKB-UniRule"/>
</dbReference>
<dbReference type="FunFam" id="3.30.70.330:FF:000001">
    <property type="entry name" value="50S ribosomal protein L23"/>
    <property type="match status" value="1"/>
</dbReference>
<dbReference type="Gene3D" id="3.30.70.330">
    <property type="match status" value="1"/>
</dbReference>
<dbReference type="HAMAP" id="MF_01369_B">
    <property type="entry name" value="Ribosomal_uL23_B"/>
    <property type="match status" value="1"/>
</dbReference>
<dbReference type="InterPro" id="IPR012677">
    <property type="entry name" value="Nucleotide-bd_a/b_plait_sf"/>
</dbReference>
<dbReference type="InterPro" id="IPR013025">
    <property type="entry name" value="Ribosomal_uL23-like"/>
</dbReference>
<dbReference type="InterPro" id="IPR012678">
    <property type="entry name" value="Ribosomal_uL23/eL15/eS24_sf"/>
</dbReference>
<dbReference type="NCBIfam" id="NF004363">
    <property type="entry name" value="PRK05738.2-4"/>
    <property type="match status" value="1"/>
</dbReference>
<dbReference type="PANTHER" id="PTHR11620">
    <property type="entry name" value="60S RIBOSOMAL PROTEIN L23A"/>
    <property type="match status" value="1"/>
</dbReference>
<dbReference type="Pfam" id="PF00276">
    <property type="entry name" value="Ribosomal_L23"/>
    <property type="match status" value="1"/>
</dbReference>
<dbReference type="SUPFAM" id="SSF54189">
    <property type="entry name" value="Ribosomal proteins S24e, L23 and L15e"/>
    <property type="match status" value="1"/>
</dbReference>
<organism>
    <name type="scientific">Acetivibrio thermocellus (strain ATCC 27405 / DSM 1237 / JCM 9322 / NBRC 103400 / NCIMB 10682 / NRRL B-4536 / VPI 7372)</name>
    <name type="common">Clostridium thermocellum</name>
    <dbReference type="NCBI Taxonomy" id="203119"/>
    <lineage>
        <taxon>Bacteria</taxon>
        <taxon>Bacillati</taxon>
        <taxon>Bacillota</taxon>
        <taxon>Clostridia</taxon>
        <taxon>Eubacteriales</taxon>
        <taxon>Oscillospiraceae</taxon>
        <taxon>Acetivibrio</taxon>
    </lineage>
</organism>
<protein>
    <recommendedName>
        <fullName evidence="1">Large ribosomal subunit protein uL23</fullName>
    </recommendedName>
    <alternativeName>
        <fullName evidence="2">50S ribosomal protein L23</fullName>
    </alternativeName>
</protein>
<evidence type="ECO:0000255" key="1">
    <source>
        <dbReference type="HAMAP-Rule" id="MF_01369"/>
    </source>
</evidence>
<evidence type="ECO:0000305" key="2"/>
<feature type="chain" id="PRO_1000068068" description="Large ribosomal subunit protein uL23">
    <location>
        <begin position="1"/>
        <end position="117"/>
    </location>
</feature>
<gene>
    <name evidence="1" type="primary">rplW</name>
    <name type="ordered locus">Cthe_2905</name>
</gene>
<keyword id="KW-1185">Reference proteome</keyword>
<keyword id="KW-0687">Ribonucleoprotein</keyword>
<keyword id="KW-0689">Ribosomal protein</keyword>
<keyword id="KW-0694">RNA-binding</keyword>
<keyword id="KW-0699">rRNA-binding</keyword>